<dbReference type="EC" id="7.-.-.-" evidence="1"/>
<dbReference type="EMBL" id="AP008934">
    <property type="protein sequence ID" value="BAE17836.1"/>
    <property type="molecule type" value="Genomic_DNA"/>
</dbReference>
<dbReference type="RefSeq" id="WP_011302607.1">
    <property type="nucleotide sequence ID" value="NZ_MTGA01000036.1"/>
</dbReference>
<dbReference type="SMR" id="Q49ZE0"/>
<dbReference type="GeneID" id="3615990"/>
<dbReference type="KEGG" id="ssp:SSP0691"/>
<dbReference type="PATRIC" id="fig|342451.11.peg.693"/>
<dbReference type="eggNOG" id="COG1122">
    <property type="taxonomic scope" value="Bacteria"/>
</dbReference>
<dbReference type="HOGENOM" id="CLU_000604_1_22_9"/>
<dbReference type="OrthoDB" id="9784332at2"/>
<dbReference type="Proteomes" id="UP000006371">
    <property type="component" value="Chromosome"/>
</dbReference>
<dbReference type="GO" id="GO:0043190">
    <property type="term" value="C:ATP-binding cassette (ABC) transporter complex"/>
    <property type="evidence" value="ECO:0007669"/>
    <property type="project" value="TreeGrafter"/>
</dbReference>
<dbReference type="GO" id="GO:0005524">
    <property type="term" value="F:ATP binding"/>
    <property type="evidence" value="ECO:0007669"/>
    <property type="project" value="UniProtKB-KW"/>
</dbReference>
<dbReference type="GO" id="GO:0016887">
    <property type="term" value="F:ATP hydrolysis activity"/>
    <property type="evidence" value="ECO:0007669"/>
    <property type="project" value="InterPro"/>
</dbReference>
<dbReference type="GO" id="GO:0042626">
    <property type="term" value="F:ATPase-coupled transmembrane transporter activity"/>
    <property type="evidence" value="ECO:0007669"/>
    <property type="project" value="TreeGrafter"/>
</dbReference>
<dbReference type="CDD" id="cd03225">
    <property type="entry name" value="ABC_cobalt_CbiO_domain1"/>
    <property type="match status" value="1"/>
</dbReference>
<dbReference type="FunFam" id="3.40.50.300:FF:000224">
    <property type="entry name" value="Energy-coupling factor transporter ATP-binding protein EcfA"/>
    <property type="match status" value="1"/>
</dbReference>
<dbReference type="Gene3D" id="3.40.50.300">
    <property type="entry name" value="P-loop containing nucleotide triphosphate hydrolases"/>
    <property type="match status" value="1"/>
</dbReference>
<dbReference type="InterPro" id="IPR003593">
    <property type="entry name" value="AAA+_ATPase"/>
</dbReference>
<dbReference type="InterPro" id="IPR003439">
    <property type="entry name" value="ABC_transporter-like_ATP-bd"/>
</dbReference>
<dbReference type="InterPro" id="IPR017871">
    <property type="entry name" value="ABC_transporter-like_CS"/>
</dbReference>
<dbReference type="InterPro" id="IPR015856">
    <property type="entry name" value="ABC_transpr_CbiO/EcfA_su"/>
</dbReference>
<dbReference type="InterPro" id="IPR050095">
    <property type="entry name" value="ECF_ABC_transporter_ATP-bd"/>
</dbReference>
<dbReference type="InterPro" id="IPR030947">
    <property type="entry name" value="EcfA_1"/>
</dbReference>
<dbReference type="InterPro" id="IPR027417">
    <property type="entry name" value="P-loop_NTPase"/>
</dbReference>
<dbReference type="NCBIfam" id="TIGR04520">
    <property type="entry name" value="ECF_ATPase_1"/>
    <property type="match status" value="1"/>
</dbReference>
<dbReference type="NCBIfam" id="NF010167">
    <property type="entry name" value="PRK13648.1"/>
    <property type="match status" value="1"/>
</dbReference>
<dbReference type="PANTHER" id="PTHR43553:SF24">
    <property type="entry name" value="ENERGY-COUPLING FACTOR TRANSPORTER ATP-BINDING PROTEIN ECFA1"/>
    <property type="match status" value="1"/>
</dbReference>
<dbReference type="PANTHER" id="PTHR43553">
    <property type="entry name" value="HEAVY METAL TRANSPORTER"/>
    <property type="match status" value="1"/>
</dbReference>
<dbReference type="Pfam" id="PF00005">
    <property type="entry name" value="ABC_tran"/>
    <property type="match status" value="1"/>
</dbReference>
<dbReference type="SMART" id="SM00382">
    <property type="entry name" value="AAA"/>
    <property type="match status" value="1"/>
</dbReference>
<dbReference type="SUPFAM" id="SSF52540">
    <property type="entry name" value="P-loop containing nucleoside triphosphate hydrolases"/>
    <property type="match status" value="1"/>
</dbReference>
<dbReference type="PROSITE" id="PS00211">
    <property type="entry name" value="ABC_TRANSPORTER_1"/>
    <property type="match status" value="1"/>
</dbReference>
<dbReference type="PROSITE" id="PS50893">
    <property type="entry name" value="ABC_TRANSPORTER_2"/>
    <property type="match status" value="1"/>
</dbReference>
<dbReference type="PROSITE" id="PS51246">
    <property type="entry name" value="CBIO"/>
    <property type="match status" value="1"/>
</dbReference>
<reference key="1">
    <citation type="journal article" date="2005" name="Proc. Natl. Acad. Sci. U.S.A.">
        <title>Whole genome sequence of Staphylococcus saprophyticus reveals the pathogenesis of uncomplicated urinary tract infection.</title>
        <authorList>
            <person name="Kuroda M."/>
            <person name="Yamashita A."/>
            <person name="Hirakawa H."/>
            <person name="Kumano M."/>
            <person name="Morikawa K."/>
            <person name="Higashide M."/>
            <person name="Maruyama A."/>
            <person name="Inose Y."/>
            <person name="Matoba K."/>
            <person name="Toh H."/>
            <person name="Kuhara S."/>
            <person name="Hattori M."/>
            <person name="Ohta T."/>
        </authorList>
    </citation>
    <scope>NUCLEOTIDE SEQUENCE [LARGE SCALE GENOMIC DNA]</scope>
    <source>
        <strain>ATCC 15305 / DSM 20229 / NCIMB 8711 / NCTC 7292 / S-41</strain>
    </source>
</reference>
<sequence length="269" mass="29822">MDTHDNIITFNHVRFKYNSDEPLALNDVSFGIPKGKWTSIVGHNGSGKSTIAKLMVGIEKPSDGHIYFRNQCINQQNLSDLRQHIGIVFQNPENQFVGSTVAFDVAFGLENNSVSYDDMQRIVPKALEDVEMLDRADYEPQSLSGGQKQRVAIAGVLALNTDVIILDEATSMLDPAGRKELISLIHRLKEEKEVTIISITHDLTEAAEADYLVVLNDGEVYQTGKPHDVFNDGDGLTEIGLDLPFSIRMARTLLGSTDFITYEGLVKKI</sequence>
<name>ECFA1_STAS1</name>
<evidence type="ECO:0000255" key="1">
    <source>
        <dbReference type="HAMAP-Rule" id="MF_01710"/>
    </source>
</evidence>
<accession>Q49ZE0</accession>
<feature type="chain" id="PRO_0000287989" description="Energy-coupling factor transporter ATP-binding protein EcfA1">
    <location>
        <begin position="1"/>
        <end position="269"/>
    </location>
</feature>
<feature type="domain" description="ABC transporter" evidence="1">
    <location>
        <begin position="8"/>
        <end position="242"/>
    </location>
</feature>
<feature type="binding site" evidence="1">
    <location>
        <begin position="42"/>
        <end position="49"/>
    </location>
    <ligand>
        <name>ATP</name>
        <dbReference type="ChEBI" id="CHEBI:30616"/>
    </ligand>
</feature>
<protein>
    <recommendedName>
        <fullName evidence="1">Energy-coupling factor transporter ATP-binding protein EcfA1</fullName>
        <shortName evidence="1">ECF transporter A component EcfA1</shortName>
        <ecNumber evidence="1">7.-.-.-</ecNumber>
    </recommendedName>
</protein>
<comment type="function">
    <text evidence="1">ATP-binding (A) component of a common energy-coupling factor (ECF) ABC-transporter complex. Unlike classic ABC transporters this ECF transporter provides the energy necessary to transport a number of different substrates.</text>
</comment>
<comment type="subunit">
    <text evidence="1">Forms a stable energy-coupling factor (ECF) transporter complex composed of 2 membrane-embedded substrate-binding proteins (S component), 2 ATP-binding proteins (A component) and 2 transmembrane proteins (T component).</text>
</comment>
<comment type="subcellular location">
    <subcellularLocation>
        <location evidence="1">Cell membrane</location>
        <topology evidence="1">Peripheral membrane protein</topology>
    </subcellularLocation>
</comment>
<comment type="similarity">
    <text evidence="1">Belongs to the ABC transporter superfamily. Energy-coupling factor EcfA family.</text>
</comment>
<proteinExistence type="inferred from homology"/>
<organism>
    <name type="scientific">Staphylococcus saprophyticus subsp. saprophyticus (strain ATCC 15305 / DSM 20229 / NCIMB 8711 / NCTC 7292 / S-41)</name>
    <dbReference type="NCBI Taxonomy" id="342451"/>
    <lineage>
        <taxon>Bacteria</taxon>
        <taxon>Bacillati</taxon>
        <taxon>Bacillota</taxon>
        <taxon>Bacilli</taxon>
        <taxon>Bacillales</taxon>
        <taxon>Staphylococcaceae</taxon>
        <taxon>Staphylococcus</taxon>
    </lineage>
</organism>
<gene>
    <name evidence="1" type="primary">ecfA1</name>
    <name type="synonym">cbiO1</name>
    <name type="ordered locus">SSP0691</name>
</gene>
<keyword id="KW-0067">ATP-binding</keyword>
<keyword id="KW-1003">Cell membrane</keyword>
<keyword id="KW-0472">Membrane</keyword>
<keyword id="KW-0547">Nucleotide-binding</keyword>
<keyword id="KW-1185">Reference proteome</keyword>
<keyword id="KW-1278">Translocase</keyword>
<keyword id="KW-0813">Transport</keyword>